<dbReference type="EC" id="3.4.-.-" evidence="1"/>
<dbReference type="EMBL" id="L13334">
    <property type="protein sequence ID" value="AAA71976.1"/>
    <property type="molecule type" value="Unassigned_DNA"/>
</dbReference>
<dbReference type="EMBL" id="AF173933">
    <property type="protein sequence ID" value="AAD51708.1"/>
    <property type="status" value="ALT_INIT"/>
    <property type="molecule type" value="Genomic_DNA"/>
</dbReference>
<dbReference type="STRING" id="28035.B6N84_04655"/>
<dbReference type="MEROPS" id="C75.001"/>
<dbReference type="eggNOG" id="COG4512">
    <property type="taxonomic scope" value="Bacteria"/>
</dbReference>
<dbReference type="GO" id="GO:0005886">
    <property type="term" value="C:plasma membrane"/>
    <property type="evidence" value="ECO:0007669"/>
    <property type="project" value="UniProtKB-SubCell"/>
</dbReference>
<dbReference type="GO" id="GO:0008233">
    <property type="term" value="F:peptidase activity"/>
    <property type="evidence" value="ECO:0007669"/>
    <property type="project" value="UniProtKB-UniRule"/>
</dbReference>
<dbReference type="GO" id="GO:0006508">
    <property type="term" value="P:proteolysis"/>
    <property type="evidence" value="ECO:0007669"/>
    <property type="project" value="UniProtKB-KW"/>
</dbReference>
<dbReference type="GO" id="GO:0009372">
    <property type="term" value="P:quorum sensing"/>
    <property type="evidence" value="ECO:0007669"/>
    <property type="project" value="UniProtKB-UniRule"/>
</dbReference>
<dbReference type="HAMAP" id="MF_00784">
    <property type="entry name" value="AgrB"/>
    <property type="match status" value="1"/>
</dbReference>
<dbReference type="InterPro" id="IPR006741">
    <property type="entry name" value="AgrB"/>
</dbReference>
<dbReference type="Pfam" id="PF04647">
    <property type="entry name" value="AgrB"/>
    <property type="match status" value="1"/>
</dbReference>
<dbReference type="SMART" id="SM00793">
    <property type="entry name" value="AgrB"/>
    <property type="match status" value="1"/>
</dbReference>
<sequence length="188" mass="21911">MKAIDKKIERFARYLQRQNNLDHIQFLKIRLGLQVALGNFFKTIVTYGVALLFHTFLYTLITHLTYFFVRRFAHGAHARSSLLCHIQNLVLFVALPWSIVHFQVSWTFMIFVAFIAFIIIICYAPSATKKQPILPHLRKKKKRNAILISICFLVLMLFVSEPYMQLIALGMCIEAITLLPIFFSKEET</sequence>
<reference key="1">
    <citation type="journal article" date="1993" name="FEMS Microbiol. Lett.">
        <title>Agr-related sequences in Staphylococcus lugdunensis.</title>
        <authorList>
            <person name="Vandenesch F."/>
            <person name="Projan S.J."/>
            <person name="Kreiswirth B."/>
            <person name="Etienne J."/>
            <person name="Novick R.P."/>
        </authorList>
    </citation>
    <scope>NUCLEOTIDE SEQUENCE [GENOMIC DNA]</scope>
</reference>
<reference key="2">
    <citation type="submission" date="1999-07" db="EMBL/GenBank/DDBJ databases">
        <title>Full agr-sl sequence of Staphylococcus lugdunensis.</title>
        <authorList>
            <person name="Benito Y."/>
        </authorList>
    </citation>
    <scope>NUCLEOTIDE SEQUENCE [GENOMIC DNA]</scope>
    <source>
        <strain>307 / RN8160</strain>
    </source>
</reference>
<comment type="function">
    <text evidence="1">Essential for the production of a quorum sensing system signal molecule, the autoinducing peptide (AIP). This quorum sensing system is responsible for the regulation of the expression of virulence factor genes. Involved in the proteolytic processing of AgrD, the precursor of AIP.</text>
</comment>
<comment type="subcellular location">
    <subcellularLocation>
        <location evidence="1">Cell membrane</location>
        <topology evidence="1">Multi-pass membrane protein</topology>
    </subcellularLocation>
</comment>
<comment type="similarity">
    <text evidence="1">Belongs to the AgrB family.</text>
</comment>
<comment type="sequence caution" evidence="2">
    <conflict type="erroneous initiation">
        <sequence resource="EMBL-CDS" id="AAD51708"/>
    </conflict>
</comment>
<feature type="chain" id="PRO_0000168132" description="Accessory gene regulator protein B">
    <location>
        <begin position="1"/>
        <end position="188"/>
    </location>
</feature>
<feature type="transmembrane region" description="Helical" evidence="1">
    <location>
        <begin position="49"/>
        <end position="69"/>
    </location>
</feature>
<feature type="transmembrane region" description="Helical" evidence="1">
    <location>
        <begin position="82"/>
        <end position="102"/>
    </location>
</feature>
<feature type="transmembrane region" description="Helical" evidence="1">
    <location>
        <begin position="104"/>
        <end position="124"/>
    </location>
</feature>
<feature type="transmembrane region" description="Helical" evidence="1">
    <location>
        <begin position="163"/>
        <end position="183"/>
    </location>
</feature>
<gene>
    <name evidence="1" type="primary">agrB</name>
</gene>
<protein>
    <recommendedName>
        <fullName evidence="1">Accessory gene regulator protein B</fullName>
        <ecNumber evidence="1">3.4.-.-</ecNumber>
    </recommendedName>
</protein>
<evidence type="ECO:0000255" key="1">
    <source>
        <dbReference type="HAMAP-Rule" id="MF_00784"/>
    </source>
</evidence>
<evidence type="ECO:0000305" key="2"/>
<accession>Q54337</accession>
<accession>Q9S3T8</accession>
<organism>
    <name type="scientific">Staphylococcus lugdunensis</name>
    <dbReference type="NCBI Taxonomy" id="28035"/>
    <lineage>
        <taxon>Bacteria</taxon>
        <taxon>Bacillati</taxon>
        <taxon>Bacillota</taxon>
        <taxon>Bacilli</taxon>
        <taxon>Bacillales</taxon>
        <taxon>Staphylococcaceae</taxon>
        <taxon>Staphylococcus</taxon>
    </lineage>
</organism>
<name>AGRB_STALU</name>
<proteinExistence type="inferred from homology"/>
<keyword id="KW-1003">Cell membrane</keyword>
<keyword id="KW-0378">Hydrolase</keyword>
<keyword id="KW-0472">Membrane</keyword>
<keyword id="KW-0645">Protease</keyword>
<keyword id="KW-0673">Quorum sensing</keyword>
<keyword id="KW-0812">Transmembrane</keyword>
<keyword id="KW-1133">Transmembrane helix</keyword>
<keyword id="KW-0843">Virulence</keyword>